<keyword id="KW-0067">ATP-binding</keyword>
<keyword id="KW-1003">Cell membrane</keyword>
<keyword id="KW-0472">Membrane</keyword>
<keyword id="KW-0547">Nucleotide-binding</keyword>
<keyword id="KW-0592">Phosphate transport</keyword>
<keyword id="KW-1278">Translocase</keyword>
<keyword id="KW-0813">Transport</keyword>
<reference key="1">
    <citation type="journal article" date="2002" name="Proc. Natl. Acad. Sci. U.S.A.">
        <title>Genome sequence of a serotype M3 strain of group A Streptococcus: phage-encoded toxins, the high-virulence phenotype, and clone emergence.</title>
        <authorList>
            <person name="Beres S.B."/>
            <person name="Sylva G.L."/>
            <person name="Barbian K.D."/>
            <person name="Lei B."/>
            <person name="Hoff J.S."/>
            <person name="Mammarella N.D."/>
            <person name="Liu M.-Y."/>
            <person name="Smoot J.C."/>
            <person name="Porcella S.F."/>
            <person name="Parkins L.D."/>
            <person name="Campbell D.S."/>
            <person name="Smith T.M."/>
            <person name="McCormick J.K."/>
            <person name="Leung D.Y.M."/>
            <person name="Schlievert P.M."/>
            <person name="Musser J.M."/>
        </authorList>
    </citation>
    <scope>NUCLEOTIDE SEQUENCE [LARGE SCALE GENOMIC DNA]</scope>
    <source>
        <strain>ATCC BAA-595 / MGAS315</strain>
    </source>
</reference>
<accession>P0CZ38</accession>
<accession>P63379</accession>
<accession>Q99ZG4</accession>
<protein>
    <recommendedName>
        <fullName evidence="1">Phosphate import ATP-binding protein PstB 2</fullName>
        <ecNumber evidence="1">7.3.2.1</ecNumber>
    </recommendedName>
    <alternativeName>
        <fullName evidence="1">ABC phosphate transporter 2</fullName>
    </alternativeName>
    <alternativeName>
        <fullName evidence="1">Phosphate-transporting ATPase 2</fullName>
    </alternativeName>
</protein>
<evidence type="ECO:0000255" key="1">
    <source>
        <dbReference type="HAMAP-Rule" id="MF_01702"/>
    </source>
</evidence>
<name>PSTB2_STRP3</name>
<feature type="chain" id="PRO_0000092906" description="Phosphate import ATP-binding protein PstB 2">
    <location>
        <begin position="1"/>
        <end position="267"/>
    </location>
</feature>
<feature type="domain" description="ABC transporter" evidence="1">
    <location>
        <begin position="21"/>
        <end position="262"/>
    </location>
</feature>
<feature type="binding site" evidence="1">
    <location>
        <begin position="53"/>
        <end position="60"/>
    </location>
    <ligand>
        <name>ATP</name>
        <dbReference type="ChEBI" id="CHEBI:30616"/>
    </ligand>
</feature>
<organism>
    <name type="scientific">Streptococcus pyogenes serotype M3 (strain ATCC BAA-595 / MGAS315)</name>
    <dbReference type="NCBI Taxonomy" id="198466"/>
    <lineage>
        <taxon>Bacteria</taxon>
        <taxon>Bacillati</taxon>
        <taxon>Bacillota</taxon>
        <taxon>Bacilli</taxon>
        <taxon>Lactobacillales</taxon>
        <taxon>Streptococcaceae</taxon>
        <taxon>Streptococcus</taxon>
    </lineage>
</organism>
<comment type="function">
    <text evidence="1">Part of the ABC transporter complex PstSACB involved in phosphate import. Responsible for energy coupling to the transport system.</text>
</comment>
<comment type="catalytic activity">
    <reaction evidence="1">
        <text>phosphate(out) + ATP + H2O = ADP + 2 phosphate(in) + H(+)</text>
        <dbReference type="Rhea" id="RHEA:24440"/>
        <dbReference type="ChEBI" id="CHEBI:15377"/>
        <dbReference type="ChEBI" id="CHEBI:15378"/>
        <dbReference type="ChEBI" id="CHEBI:30616"/>
        <dbReference type="ChEBI" id="CHEBI:43474"/>
        <dbReference type="ChEBI" id="CHEBI:456216"/>
        <dbReference type="EC" id="7.3.2.1"/>
    </reaction>
</comment>
<comment type="subunit">
    <text evidence="1">The complex is composed of two ATP-binding proteins (PstB), two transmembrane proteins (PstC and PstA) and a solute-binding protein (PstS).</text>
</comment>
<comment type="subcellular location">
    <subcellularLocation>
        <location evidence="1">Cell membrane</location>
        <topology evidence="1">Peripheral membrane protein</topology>
    </subcellularLocation>
</comment>
<comment type="similarity">
    <text evidence="1">Belongs to the ABC transporter superfamily. Phosphate importer (TC 3.A.1.7) family.</text>
</comment>
<proteinExistence type="inferred from homology"/>
<sequence>MTEYNWNERHIITFPEETLALATKDLHVYYGAKEAIKGIDMQFEKHKITALIGPSGCGKSTYLRSLNRMNDTIDIARVTGEILYQGIDVNRKDMNVYEIRKHLGMVFQRPNPFAKSIYKNITFAHERAGVKDKKVLDEIVETSLKQAALWDQVKDDLHKSAFTLSGGQQQRLCIARAISVKPDILLMDEPASALDPIATMQLEETMFELKKNYTIIIVTHNMQQAARASDYTAFFYLGNLIEYDKTRNIFQNAQCQSTNDYVSGHFG</sequence>
<gene>
    <name evidence="1" type="primary">pstB2</name>
    <name type="ordered locus">SpyM3_0878</name>
</gene>
<dbReference type="EC" id="7.3.2.1" evidence="1"/>
<dbReference type="EMBL" id="AE014074">
    <property type="protein sequence ID" value="AAM79485.1"/>
    <property type="molecule type" value="Genomic_DNA"/>
</dbReference>
<dbReference type="SMR" id="P0CZ38"/>
<dbReference type="KEGG" id="spg:SpyM3_0878"/>
<dbReference type="HOGENOM" id="CLU_000604_1_22_9"/>
<dbReference type="Proteomes" id="UP000000564">
    <property type="component" value="Chromosome"/>
</dbReference>
<dbReference type="GO" id="GO:0005886">
    <property type="term" value="C:plasma membrane"/>
    <property type="evidence" value="ECO:0007669"/>
    <property type="project" value="UniProtKB-SubCell"/>
</dbReference>
<dbReference type="GO" id="GO:0005524">
    <property type="term" value="F:ATP binding"/>
    <property type="evidence" value="ECO:0007669"/>
    <property type="project" value="UniProtKB-KW"/>
</dbReference>
<dbReference type="GO" id="GO:0016887">
    <property type="term" value="F:ATP hydrolysis activity"/>
    <property type="evidence" value="ECO:0007669"/>
    <property type="project" value="InterPro"/>
</dbReference>
<dbReference type="GO" id="GO:0015415">
    <property type="term" value="F:ATPase-coupled phosphate ion transmembrane transporter activity"/>
    <property type="evidence" value="ECO:0007669"/>
    <property type="project" value="UniProtKB-EC"/>
</dbReference>
<dbReference type="GO" id="GO:0035435">
    <property type="term" value="P:phosphate ion transmembrane transport"/>
    <property type="evidence" value="ECO:0007669"/>
    <property type="project" value="InterPro"/>
</dbReference>
<dbReference type="CDD" id="cd03260">
    <property type="entry name" value="ABC_PstB_phosphate_transporter"/>
    <property type="match status" value="1"/>
</dbReference>
<dbReference type="Gene3D" id="3.40.50.300">
    <property type="entry name" value="P-loop containing nucleotide triphosphate hydrolases"/>
    <property type="match status" value="1"/>
</dbReference>
<dbReference type="InterPro" id="IPR003593">
    <property type="entry name" value="AAA+_ATPase"/>
</dbReference>
<dbReference type="InterPro" id="IPR003439">
    <property type="entry name" value="ABC_transporter-like_ATP-bd"/>
</dbReference>
<dbReference type="InterPro" id="IPR017871">
    <property type="entry name" value="ABC_transporter-like_CS"/>
</dbReference>
<dbReference type="InterPro" id="IPR027417">
    <property type="entry name" value="P-loop_NTPase"/>
</dbReference>
<dbReference type="InterPro" id="IPR005670">
    <property type="entry name" value="PstB-like"/>
</dbReference>
<dbReference type="NCBIfam" id="TIGR00972">
    <property type="entry name" value="3a0107s01c2"/>
    <property type="match status" value="1"/>
</dbReference>
<dbReference type="PANTHER" id="PTHR43423">
    <property type="entry name" value="ABC TRANSPORTER I FAMILY MEMBER 17"/>
    <property type="match status" value="1"/>
</dbReference>
<dbReference type="PANTHER" id="PTHR43423:SF10">
    <property type="entry name" value="PHOSPHATE IMPORT ATP-BINDING PROTEIN PSTB 2"/>
    <property type="match status" value="1"/>
</dbReference>
<dbReference type="Pfam" id="PF00005">
    <property type="entry name" value="ABC_tran"/>
    <property type="match status" value="1"/>
</dbReference>
<dbReference type="SMART" id="SM00382">
    <property type="entry name" value="AAA"/>
    <property type="match status" value="1"/>
</dbReference>
<dbReference type="SUPFAM" id="SSF52540">
    <property type="entry name" value="P-loop containing nucleoside triphosphate hydrolases"/>
    <property type="match status" value="1"/>
</dbReference>
<dbReference type="PROSITE" id="PS00211">
    <property type="entry name" value="ABC_TRANSPORTER_1"/>
    <property type="match status" value="1"/>
</dbReference>
<dbReference type="PROSITE" id="PS50893">
    <property type="entry name" value="ABC_TRANSPORTER_2"/>
    <property type="match status" value="1"/>
</dbReference>
<dbReference type="PROSITE" id="PS51238">
    <property type="entry name" value="PSTB"/>
    <property type="match status" value="1"/>
</dbReference>